<keyword id="KW-0067">ATP-binding</keyword>
<keyword id="KW-0997">Cell inner membrane</keyword>
<keyword id="KW-1003">Cell membrane</keyword>
<keyword id="KW-0472">Membrane</keyword>
<keyword id="KW-0547">Nucleotide-binding</keyword>
<keyword id="KW-1278">Translocase</keyword>
<keyword id="KW-0813">Transport</keyword>
<sequence>MHINYISVGNRLLPLSFQCAAGEKVYVAGPNGSGKSTLLSAIAGTLSSREGVKGEVLINETSLLTLPLAEQAIYRAYLCQQSRPAFNVDVFQMLALSLPVGRHVAEPEVQAAVRRVVELVQMQDKLHRSVQALSGGEWQRVRLAAVCLQVWRSLNPYSQLLILDEPAAPLDVAQAKWLYQLIDEMAAQGLVVIVANHDLNRVYQHADKVLLLNQGVLTAYGSADEVMSVENLQQVFETPVKKVAVDGQPYLIFT</sequence>
<comment type="function">
    <text evidence="1">Part of the ABC transporter complex BtuCDF involved in vitamin B12 import. Responsible for energy coupling to the transport system.</text>
</comment>
<comment type="catalytic activity">
    <reaction evidence="1">
        <text>an R-cob(III)alamin(out) + ATP + H2O = an R-cob(III)alamin(in) + ADP + phosphate + H(+)</text>
        <dbReference type="Rhea" id="RHEA:17873"/>
        <dbReference type="ChEBI" id="CHEBI:15377"/>
        <dbReference type="ChEBI" id="CHEBI:15378"/>
        <dbReference type="ChEBI" id="CHEBI:30616"/>
        <dbReference type="ChEBI" id="CHEBI:43474"/>
        <dbReference type="ChEBI" id="CHEBI:140785"/>
        <dbReference type="ChEBI" id="CHEBI:456216"/>
        <dbReference type="EC" id="7.6.2.8"/>
    </reaction>
</comment>
<comment type="subunit">
    <text evidence="1">The complex is composed of two ATP-binding proteins (BtuD), two transmembrane proteins (BtuC) and a solute-binding protein (BtuF).</text>
</comment>
<comment type="subcellular location">
    <subcellularLocation>
        <location evidence="1">Cell inner membrane</location>
        <topology evidence="1">Peripheral membrane protein</topology>
    </subcellularLocation>
</comment>
<comment type="similarity">
    <text evidence="1">Belongs to the ABC transporter superfamily. Vitamin B12 importer (TC 3.A.1.13.1) family.</text>
</comment>
<dbReference type="EC" id="7.6.2.8" evidence="1"/>
<dbReference type="EMBL" id="AE016795">
    <property type="protein sequence ID" value="AAO11123.2"/>
    <property type="molecule type" value="Genomic_DNA"/>
</dbReference>
<dbReference type="RefSeq" id="WP_011080617.1">
    <property type="nucleotide sequence ID" value="NC_004459.3"/>
</dbReference>
<dbReference type="SMR" id="Q8D928"/>
<dbReference type="KEGG" id="vvu:VV1_2781"/>
<dbReference type="HOGENOM" id="CLU_000604_1_11_6"/>
<dbReference type="Proteomes" id="UP000002275">
    <property type="component" value="Chromosome 1"/>
</dbReference>
<dbReference type="GO" id="GO:0005886">
    <property type="term" value="C:plasma membrane"/>
    <property type="evidence" value="ECO:0007669"/>
    <property type="project" value="UniProtKB-SubCell"/>
</dbReference>
<dbReference type="GO" id="GO:0015420">
    <property type="term" value="F:ABC-type vitamin B12 transporter activity"/>
    <property type="evidence" value="ECO:0007669"/>
    <property type="project" value="UniProtKB-UniRule"/>
</dbReference>
<dbReference type="GO" id="GO:0005524">
    <property type="term" value="F:ATP binding"/>
    <property type="evidence" value="ECO:0007669"/>
    <property type="project" value="UniProtKB-KW"/>
</dbReference>
<dbReference type="GO" id="GO:0016887">
    <property type="term" value="F:ATP hydrolysis activity"/>
    <property type="evidence" value="ECO:0007669"/>
    <property type="project" value="InterPro"/>
</dbReference>
<dbReference type="CDD" id="cd03214">
    <property type="entry name" value="ABC_Iron-Siderophores_B12_Hemin"/>
    <property type="match status" value="1"/>
</dbReference>
<dbReference type="FunFam" id="3.40.50.300:FF:000462">
    <property type="entry name" value="Vitamin B12 import ATP-binding protein BtuD"/>
    <property type="match status" value="1"/>
</dbReference>
<dbReference type="Gene3D" id="3.40.50.300">
    <property type="entry name" value="P-loop containing nucleotide triphosphate hydrolases"/>
    <property type="match status" value="1"/>
</dbReference>
<dbReference type="HAMAP" id="MF_01005">
    <property type="entry name" value="BtuD"/>
    <property type="match status" value="1"/>
</dbReference>
<dbReference type="InterPro" id="IPR003593">
    <property type="entry name" value="AAA+_ATPase"/>
</dbReference>
<dbReference type="InterPro" id="IPR003439">
    <property type="entry name" value="ABC_transporter-like_ATP-bd"/>
</dbReference>
<dbReference type="InterPro" id="IPR023693">
    <property type="entry name" value="ABC_transptr_BtuD"/>
</dbReference>
<dbReference type="InterPro" id="IPR050153">
    <property type="entry name" value="Metal_Ion_Import_ABC"/>
</dbReference>
<dbReference type="InterPro" id="IPR027417">
    <property type="entry name" value="P-loop_NTPase"/>
</dbReference>
<dbReference type="NCBIfam" id="NF002981">
    <property type="entry name" value="PRK03695.1"/>
    <property type="match status" value="1"/>
</dbReference>
<dbReference type="PANTHER" id="PTHR42734">
    <property type="entry name" value="METAL TRANSPORT SYSTEM ATP-BINDING PROTEIN TM_0124-RELATED"/>
    <property type="match status" value="1"/>
</dbReference>
<dbReference type="PANTHER" id="PTHR42734:SF18">
    <property type="entry name" value="VITAMIN B12 IMPORT ATP-BINDING PROTEIN BTUD"/>
    <property type="match status" value="1"/>
</dbReference>
<dbReference type="Pfam" id="PF00005">
    <property type="entry name" value="ABC_tran"/>
    <property type="match status" value="1"/>
</dbReference>
<dbReference type="SMART" id="SM00382">
    <property type="entry name" value="AAA"/>
    <property type="match status" value="1"/>
</dbReference>
<dbReference type="SUPFAM" id="SSF52540">
    <property type="entry name" value="P-loop containing nucleoside triphosphate hydrolases"/>
    <property type="match status" value="1"/>
</dbReference>
<dbReference type="PROSITE" id="PS50893">
    <property type="entry name" value="ABC_TRANSPORTER_2"/>
    <property type="match status" value="1"/>
</dbReference>
<feature type="chain" id="PRO_0000091963" description="Vitamin B12 import ATP-binding protein BtuD">
    <location>
        <begin position="1"/>
        <end position="254"/>
    </location>
</feature>
<feature type="domain" description="ABC transporter" evidence="1">
    <location>
        <begin position="3"/>
        <end position="239"/>
    </location>
</feature>
<feature type="binding site" evidence="1">
    <location>
        <begin position="29"/>
        <end position="36"/>
    </location>
    <ligand>
        <name>ATP</name>
        <dbReference type="ChEBI" id="CHEBI:30616"/>
    </ligand>
</feature>
<organism>
    <name type="scientific">Vibrio vulnificus (strain CMCP6)</name>
    <dbReference type="NCBI Taxonomy" id="216895"/>
    <lineage>
        <taxon>Bacteria</taxon>
        <taxon>Pseudomonadati</taxon>
        <taxon>Pseudomonadota</taxon>
        <taxon>Gammaproteobacteria</taxon>
        <taxon>Vibrionales</taxon>
        <taxon>Vibrionaceae</taxon>
        <taxon>Vibrio</taxon>
    </lineage>
</organism>
<protein>
    <recommendedName>
        <fullName evidence="1">Vitamin B12 import ATP-binding protein BtuD</fullName>
        <ecNumber evidence="1">7.6.2.8</ecNumber>
    </recommendedName>
    <alternativeName>
        <fullName evidence="1">Vitamin B12-transporting ATPase</fullName>
    </alternativeName>
</protein>
<proteinExistence type="inferred from homology"/>
<name>BTUD_VIBVU</name>
<gene>
    <name evidence="1" type="primary">btuD</name>
    <name type="ordered locus">VV1_2781</name>
</gene>
<evidence type="ECO:0000255" key="1">
    <source>
        <dbReference type="HAMAP-Rule" id="MF_01005"/>
    </source>
</evidence>
<reference key="1">
    <citation type="submission" date="2002-12" db="EMBL/GenBank/DDBJ databases">
        <title>Complete genome sequence of Vibrio vulnificus CMCP6.</title>
        <authorList>
            <person name="Rhee J.H."/>
            <person name="Kim S.Y."/>
            <person name="Chung S.S."/>
            <person name="Kim J.J."/>
            <person name="Moon Y.H."/>
            <person name="Jeong H."/>
            <person name="Choy H.E."/>
        </authorList>
    </citation>
    <scope>NUCLEOTIDE SEQUENCE [LARGE SCALE GENOMIC DNA]</scope>
    <source>
        <strain>CMCP6</strain>
    </source>
</reference>
<accession>Q8D928</accession>